<feature type="chain" id="PRO_0000070191" description="Thyrotropin-releasing hormone receptor">
    <location>
        <begin position="1"/>
        <end position="395"/>
    </location>
</feature>
<feature type="topological domain" description="Extracellular" evidence="2">
    <location>
        <begin position="1"/>
        <end position="30"/>
    </location>
</feature>
<feature type="transmembrane region" description="Helical; Name=1" evidence="2">
    <location>
        <begin position="31"/>
        <end position="53"/>
    </location>
</feature>
<feature type="topological domain" description="Cytoplasmic" evidence="2">
    <location>
        <begin position="54"/>
        <end position="63"/>
    </location>
</feature>
<feature type="transmembrane region" description="Helical; Name=2" evidence="2">
    <location>
        <begin position="64"/>
        <end position="85"/>
    </location>
</feature>
<feature type="topological domain" description="Extracellular" evidence="2">
    <location>
        <begin position="86"/>
        <end position="101"/>
    </location>
</feature>
<feature type="transmembrane region" description="Helical; Name=3" evidence="2">
    <location>
        <begin position="102"/>
        <end position="123"/>
    </location>
</feature>
<feature type="topological domain" description="Cytoplasmic" evidence="2">
    <location>
        <begin position="124"/>
        <end position="146"/>
    </location>
</feature>
<feature type="transmembrane region" description="Helical; Name=4" evidence="2">
    <location>
        <begin position="147"/>
        <end position="170"/>
    </location>
</feature>
<feature type="topological domain" description="Extracellular" evidence="2">
    <location>
        <begin position="171"/>
        <end position="195"/>
    </location>
</feature>
<feature type="transmembrane region" description="Helical; Name=5" evidence="2">
    <location>
        <begin position="196"/>
        <end position="217"/>
    </location>
</feature>
<feature type="topological domain" description="Cytoplasmic" evidence="2">
    <location>
        <begin position="218"/>
        <end position="268"/>
    </location>
</feature>
<feature type="transmembrane region" description="Helical; Name=6" evidence="2">
    <location>
        <begin position="269"/>
        <end position="290"/>
    </location>
</feature>
<feature type="topological domain" description="Extracellular" evidence="2">
    <location>
        <begin position="291"/>
        <end position="298"/>
    </location>
</feature>
<feature type="transmembrane region" description="Helical; Name=7" evidence="2">
    <location>
        <begin position="299"/>
        <end position="321"/>
    </location>
</feature>
<feature type="topological domain" description="Cytoplasmic" evidence="2">
    <location>
        <begin position="322"/>
        <end position="395"/>
    </location>
</feature>
<feature type="glycosylation site" description="N-linked (GlcNAc...) asparagine" evidence="2">
    <location>
        <position position="3"/>
    </location>
</feature>
<feature type="glycosylation site" description="N-linked (GlcNAc...) asparagine" evidence="2">
    <location>
        <position position="10"/>
    </location>
</feature>
<feature type="disulfide bond" evidence="3">
    <location>
        <begin position="100"/>
        <end position="181"/>
    </location>
</feature>
<comment type="function">
    <text evidence="1">Receptor for thyrotropin-releasing hormone (TRH). Upon ligand binding, this G-protein-coupled receptor triggers activation of the phosphatidylinositol (IP3)-calcium-protein kinase C (PKC) pathway.</text>
</comment>
<comment type="subcellular location">
    <subcellularLocation>
        <location evidence="1">Cell membrane</location>
        <topology evidence="2">Multi-pass membrane protein</topology>
    </subcellularLocation>
</comment>
<comment type="similarity">
    <text evidence="3">Belongs to the G-protein coupled receptor 1 family.</text>
</comment>
<protein>
    <recommendedName>
        <fullName>Thyrotropin-releasing hormone receptor</fullName>
        <shortName>TRH-R</shortName>
    </recommendedName>
    <alternativeName>
        <fullName>Thyroliberin receptor</fullName>
    </alternativeName>
</protein>
<accession>O93603</accession>
<reference key="1">
    <citation type="journal article" date="1998" name="Endocrinology">
        <title>Cloning and characterization of the chicken thyrotropin-releasing hormone receptor.</title>
        <authorList>
            <person name="Sun Y.M."/>
            <person name="Millar R.P."/>
            <person name="Ho H."/>
            <person name="Gershengorn M.C."/>
            <person name="Illing N."/>
        </authorList>
    </citation>
    <scope>NUCLEOTIDE SEQUENCE [MRNA]</scope>
    <source>
        <tissue>Pituitary</tissue>
    </source>
</reference>
<gene>
    <name type="primary">TRHR</name>
</gene>
<keyword id="KW-1003">Cell membrane</keyword>
<keyword id="KW-1015">Disulfide bond</keyword>
<keyword id="KW-0297">G-protein coupled receptor</keyword>
<keyword id="KW-0325">Glycoprotein</keyword>
<keyword id="KW-0472">Membrane</keyword>
<keyword id="KW-0675">Receptor</keyword>
<keyword id="KW-1185">Reference proteome</keyword>
<keyword id="KW-0807">Transducer</keyword>
<keyword id="KW-0812">Transmembrane</keyword>
<keyword id="KW-1133">Transmembrane helix</keyword>
<dbReference type="EMBL" id="Y18244">
    <property type="protein sequence ID" value="CAA77091.1"/>
    <property type="molecule type" value="mRNA"/>
</dbReference>
<dbReference type="RefSeq" id="NP_990261.1">
    <property type="nucleotide sequence ID" value="NM_204930.1"/>
</dbReference>
<dbReference type="SMR" id="O93603"/>
<dbReference type="FunCoup" id="O93603">
    <property type="interactions" value="133"/>
</dbReference>
<dbReference type="STRING" id="9031.ENSGALP00000047209"/>
<dbReference type="GlyCosmos" id="O93603">
    <property type="glycosylation" value="2 sites, No reported glycans"/>
</dbReference>
<dbReference type="GlyGen" id="O93603">
    <property type="glycosylation" value="2 sites"/>
</dbReference>
<dbReference type="PaxDb" id="9031-ENSGALP00000035808"/>
<dbReference type="GeneID" id="395770"/>
<dbReference type="KEGG" id="gga:395770"/>
<dbReference type="CTD" id="7201"/>
<dbReference type="VEuPathDB" id="HostDB:geneid_395770"/>
<dbReference type="eggNOG" id="KOG3656">
    <property type="taxonomic scope" value="Eukaryota"/>
</dbReference>
<dbReference type="InParanoid" id="O93603"/>
<dbReference type="OrthoDB" id="10036964at2759"/>
<dbReference type="PhylomeDB" id="O93603"/>
<dbReference type="PRO" id="PR:O93603"/>
<dbReference type="Proteomes" id="UP000000539">
    <property type="component" value="Unassembled WGS sequence"/>
</dbReference>
<dbReference type="GO" id="GO:0005886">
    <property type="term" value="C:plasma membrane"/>
    <property type="evidence" value="ECO:0007669"/>
    <property type="project" value="UniProtKB-SubCell"/>
</dbReference>
<dbReference type="GO" id="GO:0004997">
    <property type="term" value="F:thyrotropin-releasing hormone receptor activity"/>
    <property type="evidence" value="ECO:0000318"/>
    <property type="project" value="GO_Central"/>
</dbReference>
<dbReference type="GO" id="GO:0007200">
    <property type="term" value="P:phospholipase C-activating G protein-coupled receptor signaling pathway"/>
    <property type="evidence" value="ECO:0000318"/>
    <property type="project" value="GO_Central"/>
</dbReference>
<dbReference type="CDD" id="cd14995">
    <property type="entry name" value="7tmA_TRH-R"/>
    <property type="match status" value="1"/>
</dbReference>
<dbReference type="FunFam" id="1.20.1070.10:FF:000186">
    <property type="entry name" value="thyrotropin-releasing hormone receptor"/>
    <property type="match status" value="1"/>
</dbReference>
<dbReference type="Gene3D" id="1.20.1070.10">
    <property type="entry name" value="Rhodopsin 7-helix transmembrane proteins"/>
    <property type="match status" value="1"/>
</dbReference>
<dbReference type="InterPro" id="IPR000276">
    <property type="entry name" value="GPCR_Rhodpsn"/>
</dbReference>
<dbReference type="InterPro" id="IPR017452">
    <property type="entry name" value="GPCR_Rhodpsn_7TM"/>
</dbReference>
<dbReference type="InterPro" id="IPR002120">
    <property type="entry name" value="TRH_rcpt_1"/>
</dbReference>
<dbReference type="PANTHER" id="PTHR46061">
    <property type="entry name" value="THYROTROPIN-RELEASING HORMONE RECEPTOR"/>
    <property type="match status" value="1"/>
</dbReference>
<dbReference type="PANTHER" id="PTHR46061:SF2">
    <property type="entry name" value="THYROTROPIN-RELEASING HORMONE RECEPTOR"/>
    <property type="match status" value="1"/>
</dbReference>
<dbReference type="Pfam" id="PF00001">
    <property type="entry name" value="7tm_1"/>
    <property type="match status" value="1"/>
</dbReference>
<dbReference type="PRINTS" id="PR00237">
    <property type="entry name" value="GPCRRHODOPSN"/>
</dbReference>
<dbReference type="PRINTS" id="PR00751">
    <property type="entry name" value="THYROLIBRINR"/>
</dbReference>
<dbReference type="PRINTS" id="PR01846">
    <property type="entry name" value="TRHRFAMILY"/>
</dbReference>
<dbReference type="SMART" id="SM01381">
    <property type="entry name" value="7TM_GPCR_Srsx"/>
    <property type="match status" value="1"/>
</dbReference>
<dbReference type="SUPFAM" id="SSF81321">
    <property type="entry name" value="Family A G protein-coupled receptor-like"/>
    <property type="match status" value="1"/>
</dbReference>
<dbReference type="PROSITE" id="PS00237">
    <property type="entry name" value="G_PROTEIN_RECEP_F1_1"/>
    <property type="match status" value="1"/>
</dbReference>
<dbReference type="PROSITE" id="PS50262">
    <property type="entry name" value="G_PROTEIN_RECEP_F1_2"/>
    <property type="match status" value="1"/>
</dbReference>
<evidence type="ECO:0000250" key="1">
    <source>
        <dbReference type="UniProtKB" id="P34981"/>
    </source>
</evidence>
<evidence type="ECO:0000255" key="2"/>
<evidence type="ECO:0000255" key="3">
    <source>
        <dbReference type="PROSITE-ProRule" id="PRU00521"/>
    </source>
</evidence>
<proteinExistence type="evidence at transcript level"/>
<organism>
    <name type="scientific">Gallus gallus</name>
    <name type="common">Chicken</name>
    <dbReference type="NCBI Taxonomy" id="9031"/>
    <lineage>
        <taxon>Eukaryota</taxon>
        <taxon>Metazoa</taxon>
        <taxon>Chordata</taxon>
        <taxon>Craniata</taxon>
        <taxon>Vertebrata</taxon>
        <taxon>Euteleostomi</taxon>
        <taxon>Archelosauria</taxon>
        <taxon>Archosauria</taxon>
        <taxon>Dinosauria</taxon>
        <taxon>Saurischia</taxon>
        <taxon>Theropoda</taxon>
        <taxon>Coelurosauria</taxon>
        <taxon>Aves</taxon>
        <taxon>Neognathae</taxon>
        <taxon>Galloanserae</taxon>
        <taxon>Galliformes</taxon>
        <taxon>Phasianidae</taxon>
        <taxon>Phasianinae</taxon>
        <taxon>Gallus</taxon>
    </lineage>
</organism>
<name>TRHR_CHICK</name>
<sequence>MENGTGDEQNHTGLLLSSQEFVTAEYQVVTILLVLLICGLGIVGNIMVVLVVLRTKHMRTPTNCYLVSLAVADLMVLVAAGLPNITESLYKSWVYGYVGCLCITYLQYLGINASSFSITAFTIERYIAICHPIKAQFLCTFSRAKKIIIFVWSFASVYCMLWFFLLDLNIAVYKDTTVVSCGYKVSRSYYSPIYMMDFGIFYVLPMVLATVLYGLIARILFLNPIPSDPKENSNTWKNDMAQQNKTVNSKMTNKSFNSTIASRRQVTKMLAVVVVLFAFLWMPYRTLVVVNSFLSSPFQENWFLLFCRICIYLNSAINPVIYNLMSQKFRAAFRKLCNCHLKRDKKPANYSVALNYNVIKESDHFSSEIEDITVTNTYLSSAKTSIGDTCLSSEA</sequence>